<name>RPOA_RHDSA</name>
<reference key="1">
    <citation type="journal article" date="2007" name="Mol. Biol. Evol.">
        <title>Plastid genome sequence of the cryptophyte alga Rhodomonas salina CCMP1319: lateral transfer of putative DNA replication machinery and a test of chromist plastid phylogeny.</title>
        <authorList>
            <person name="Khan H."/>
            <person name="Parks N."/>
            <person name="Kozera C."/>
            <person name="Curtis B.A."/>
            <person name="Parsons B.J."/>
            <person name="Bowman S."/>
            <person name="Archibald J.M."/>
        </authorList>
    </citation>
    <scope>NUCLEOTIDE SEQUENCE [LARGE SCALE GENOMIC DNA]</scope>
    <source>
        <strain>CCMP1319 / NEPCC76 / CS-174</strain>
    </source>
</reference>
<dbReference type="EC" id="2.7.7.6" evidence="1"/>
<dbReference type="EMBL" id="EF508371">
    <property type="protein sequence ID" value="ABO70785.1"/>
    <property type="molecule type" value="Genomic_DNA"/>
</dbReference>
<dbReference type="RefSeq" id="YP_001293601.1">
    <property type="nucleotide sequence ID" value="NC_009573.1"/>
</dbReference>
<dbReference type="SMR" id="A6MW22"/>
<dbReference type="GeneID" id="5228555"/>
<dbReference type="GO" id="GO:0009507">
    <property type="term" value="C:chloroplast"/>
    <property type="evidence" value="ECO:0007669"/>
    <property type="project" value="UniProtKB-SubCell"/>
</dbReference>
<dbReference type="GO" id="GO:0000428">
    <property type="term" value="C:DNA-directed RNA polymerase complex"/>
    <property type="evidence" value="ECO:0007669"/>
    <property type="project" value="UniProtKB-KW"/>
</dbReference>
<dbReference type="GO" id="GO:0005739">
    <property type="term" value="C:mitochondrion"/>
    <property type="evidence" value="ECO:0007669"/>
    <property type="project" value="GOC"/>
</dbReference>
<dbReference type="GO" id="GO:0003677">
    <property type="term" value="F:DNA binding"/>
    <property type="evidence" value="ECO:0007669"/>
    <property type="project" value="UniProtKB-UniRule"/>
</dbReference>
<dbReference type="GO" id="GO:0003899">
    <property type="term" value="F:DNA-directed RNA polymerase activity"/>
    <property type="evidence" value="ECO:0007669"/>
    <property type="project" value="UniProtKB-UniRule"/>
</dbReference>
<dbReference type="GO" id="GO:0046983">
    <property type="term" value="F:protein dimerization activity"/>
    <property type="evidence" value="ECO:0007669"/>
    <property type="project" value="InterPro"/>
</dbReference>
<dbReference type="GO" id="GO:0006351">
    <property type="term" value="P:DNA-templated transcription"/>
    <property type="evidence" value="ECO:0007669"/>
    <property type="project" value="UniProtKB-UniRule"/>
</dbReference>
<dbReference type="CDD" id="cd06928">
    <property type="entry name" value="RNAP_alpha_NTD"/>
    <property type="match status" value="1"/>
</dbReference>
<dbReference type="FunFam" id="2.170.120.12:FF:000001">
    <property type="entry name" value="DNA-directed RNA polymerase subunit alpha"/>
    <property type="match status" value="1"/>
</dbReference>
<dbReference type="Gene3D" id="1.10.150.20">
    <property type="entry name" value="5' to 3' exonuclease, C-terminal subdomain"/>
    <property type="match status" value="1"/>
</dbReference>
<dbReference type="Gene3D" id="2.170.120.12">
    <property type="entry name" value="DNA-directed RNA polymerase, insert domain"/>
    <property type="match status" value="1"/>
</dbReference>
<dbReference type="Gene3D" id="3.30.1360.10">
    <property type="entry name" value="RNA polymerase, RBP11-like subunit"/>
    <property type="match status" value="1"/>
</dbReference>
<dbReference type="HAMAP" id="MF_00059">
    <property type="entry name" value="RNApol_bact_RpoA"/>
    <property type="match status" value="1"/>
</dbReference>
<dbReference type="InterPro" id="IPR011262">
    <property type="entry name" value="DNA-dir_RNA_pol_insert"/>
</dbReference>
<dbReference type="InterPro" id="IPR011263">
    <property type="entry name" value="DNA-dir_RNA_pol_RpoA/D/Rpb3"/>
</dbReference>
<dbReference type="InterPro" id="IPR011773">
    <property type="entry name" value="DNA-dir_RpoA"/>
</dbReference>
<dbReference type="InterPro" id="IPR036603">
    <property type="entry name" value="RBP11-like"/>
</dbReference>
<dbReference type="InterPro" id="IPR011260">
    <property type="entry name" value="RNAP_asu_C"/>
</dbReference>
<dbReference type="InterPro" id="IPR036643">
    <property type="entry name" value="RNApol_insert_sf"/>
</dbReference>
<dbReference type="NCBIfam" id="NF003516">
    <property type="entry name" value="PRK05182.2-2"/>
    <property type="match status" value="1"/>
</dbReference>
<dbReference type="NCBIfam" id="NF003519">
    <property type="entry name" value="PRK05182.2-5"/>
    <property type="match status" value="1"/>
</dbReference>
<dbReference type="NCBIfam" id="TIGR02027">
    <property type="entry name" value="rpoA"/>
    <property type="match status" value="1"/>
</dbReference>
<dbReference type="Pfam" id="PF01000">
    <property type="entry name" value="RNA_pol_A_bac"/>
    <property type="match status" value="1"/>
</dbReference>
<dbReference type="Pfam" id="PF03118">
    <property type="entry name" value="RNA_pol_A_CTD"/>
    <property type="match status" value="1"/>
</dbReference>
<dbReference type="Pfam" id="PF01193">
    <property type="entry name" value="RNA_pol_L"/>
    <property type="match status" value="1"/>
</dbReference>
<dbReference type="SMART" id="SM00662">
    <property type="entry name" value="RPOLD"/>
    <property type="match status" value="1"/>
</dbReference>
<dbReference type="SUPFAM" id="SSF47789">
    <property type="entry name" value="C-terminal domain of RNA polymerase alpha subunit"/>
    <property type="match status" value="1"/>
</dbReference>
<dbReference type="SUPFAM" id="SSF56553">
    <property type="entry name" value="Insert subdomain of RNA polymerase alpha subunit"/>
    <property type="match status" value="1"/>
</dbReference>
<dbReference type="SUPFAM" id="SSF55257">
    <property type="entry name" value="RBP11-like subunits of RNA polymerase"/>
    <property type="match status" value="1"/>
</dbReference>
<geneLocation type="chloroplast"/>
<organism>
    <name type="scientific">Rhodomonas salina</name>
    <name type="common">Cryptomonas salina</name>
    <dbReference type="NCBI Taxonomy" id="52970"/>
    <lineage>
        <taxon>Eukaryota</taxon>
        <taxon>Cryptophyceae</taxon>
        <taxon>Pyrenomonadales</taxon>
        <taxon>Pyrenomonadaceae</taxon>
        <taxon>Rhodomonas</taxon>
    </lineage>
</organism>
<accession>A6MW22</accession>
<feature type="chain" id="PRO_0000323673" description="DNA-directed RNA polymerase subunit alpha">
    <location>
        <begin position="1"/>
        <end position="314"/>
    </location>
</feature>
<feature type="region of interest" description="Alpha N-terminal domain (alpha-NTD)" evidence="1">
    <location>
        <begin position="1"/>
        <end position="227"/>
    </location>
</feature>
<feature type="region of interest" description="Alpha C-terminal domain (alpha-CTD)" evidence="1">
    <location>
        <begin position="241"/>
        <end position="314"/>
    </location>
</feature>
<gene>
    <name evidence="1" type="primary">rpoA</name>
</gene>
<protein>
    <recommendedName>
        <fullName evidence="1">DNA-directed RNA polymerase subunit alpha</fullName>
        <shortName evidence="1">PEP</shortName>
        <ecNumber evidence="1">2.7.7.6</ecNumber>
    </recommendedName>
    <alternativeName>
        <fullName evidence="1">Plastid-encoded RNA polymerase subunit alpha</fullName>
        <shortName evidence="1">RNA polymerase subunit alpha</shortName>
    </alternativeName>
</protein>
<proteinExistence type="inferred from homology"/>
<evidence type="ECO:0000255" key="1">
    <source>
        <dbReference type="HAMAP-Rule" id="MF_00059"/>
    </source>
</evidence>
<keyword id="KW-0150">Chloroplast</keyword>
<keyword id="KW-0240">DNA-directed RNA polymerase</keyword>
<keyword id="KW-0548">Nucleotidyltransferase</keyword>
<keyword id="KW-0934">Plastid</keyword>
<keyword id="KW-0804">Transcription</keyword>
<keyword id="KW-0808">Transferase</keyword>
<comment type="function">
    <text evidence="1">DNA-dependent RNA polymerase catalyzes the transcription of DNA into RNA using the four ribonucleoside triphosphates as substrates.</text>
</comment>
<comment type="catalytic activity">
    <reaction evidence="1">
        <text>RNA(n) + a ribonucleoside 5'-triphosphate = RNA(n+1) + diphosphate</text>
        <dbReference type="Rhea" id="RHEA:21248"/>
        <dbReference type="Rhea" id="RHEA-COMP:14527"/>
        <dbReference type="Rhea" id="RHEA-COMP:17342"/>
        <dbReference type="ChEBI" id="CHEBI:33019"/>
        <dbReference type="ChEBI" id="CHEBI:61557"/>
        <dbReference type="ChEBI" id="CHEBI:140395"/>
        <dbReference type="EC" id="2.7.7.6"/>
    </reaction>
</comment>
<comment type="subunit">
    <text evidence="1">In plastids the minimal PEP RNA polymerase catalytic core is composed of four subunits: alpha, beta, beta', and beta''. When a (nuclear-encoded) sigma factor is associated with the core the holoenzyme is formed, which can initiate transcription.</text>
</comment>
<comment type="subcellular location">
    <subcellularLocation>
        <location>Plastid</location>
        <location>Chloroplast</location>
    </subcellularLocation>
</comment>
<comment type="domain">
    <text evidence="1">The N-terminal domain is essential for RNAP assembly and basal transcription, whereas the C-terminal domain is involved in interaction with transcriptional regulators and with upstream promoter elements.</text>
</comment>
<comment type="similarity">
    <text evidence="1">Belongs to the RNA polymerase alpha chain family.</text>
</comment>
<sequence>MTKFEIECVESTTDGARDHYSKFCLEPLEQGQGVTLGNALRRTLLSDLEGTAIVAVRIAGVSHEFSTIPGIREDVLEILLNLKEVVLKSQTKNPSVGRLRVQGPAIVTTSNLELPSEVELIDPNQYIATICGNNILEMEFRIETGKGYHLIERSIDETSIDFLQVDAIFMPVKKVNYLTKDIRSNDNLLQEQLLLEVWTNGSIDPQDAVSQGGKILTELLHPLKEINFKSDEEDTVAEDSKINQILIEELQLSVRAYNCLKRAQIHSVADLLDYSQEDLIEIKNFGQKSAEEVIDALQKRLGINLPKEKTVKPN</sequence>